<proteinExistence type="evidence at protein level"/>
<accession>Q2I0M5</accession>
<accession>A2A2I6</accession>
<accession>Q9UGB2</accession>
<protein>
    <recommendedName>
        <fullName>R-spondin-4</fullName>
    </recommendedName>
    <alternativeName>
        <fullName>Roof plate-specific spondin-4</fullName>
        <shortName>hRspo4</shortName>
    </alternativeName>
</protein>
<gene>
    <name type="primary">RSPO4</name>
    <name type="synonym">C20orf182</name>
</gene>
<name>RSPO4_HUMAN</name>
<feature type="signal peptide" evidence="2">
    <location>
        <begin position="1"/>
        <end position="19"/>
    </location>
</feature>
<feature type="chain" id="PRO_0000234446" description="R-spondin-4">
    <location>
        <begin position="20"/>
        <end position="234"/>
    </location>
</feature>
<feature type="repeat" description="FU">
    <location>
        <begin position="85"/>
        <end position="128"/>
    </location>
</feature>
<feature type="domain" description="TSP type-1" evidence="3">
    <location>
        <begin position="138"/>
        <end position="197"/>
    </location>
</feature>
<feature type="region of interest" description="Disordered" evidence="4">
    <location>
        <begin position="190"/>
        <end position="234"/>
    </location>
</feature>
<feature type="compositionally biased region" description="Basic residues" evidence="4">
    <location>
        <begin position="203"/>
        <end position="216"/>
    </location>
</feature>
<feature type="compositionally biased region" description="Basic and acidic residues" evidence="4">
    <location>
        <begin position="217"/>
        <end position="227"/>
    </location>
</feature>
<feature type="glycosylation site" description="N-linked (GlcNAc...) asparagine" evidence="2">
    <location>
        <position position="34"/>
    </location>
</feature>
<feature type="disulfide bond" evidence="3">
    <location>
        <begin position="35"/>
        <end position="41"/>
    </location>
</feature>
<feature type="disulfide bond" evidence="3">
    <location>
        <begin position="38"/>
        <end position="47"/>
    </location>
</feature>
<feature type="disulfide bond" evidence="3">
    <location>
        <begin position="50"/>
        <end position="69"/>
    </location>
</feature>
<feature type="disulfide bond" evidence="3">
    <location>
        <begin position="73"/>
        <end position="88"/>
    </location>
</feature>
<feature type="disulfide bond" evidence="3">
    <location>
        <begin position="91"/>
        <end position="98"/>
    </location>
</feature>
<feature type="disulfide bond" evidence="3">
    <location>
        <begin position="95"/>
        <end position="104"/>
    </location>
</feature>
<feature type="disulfide bond" evidence="3">
    <location>
        <begin position="107"/>
        <end position="118"/>
    </location>
</feature>
<feature type="disulfide bond" evidence="3">
    <location>
        <begin position="122"/>
        <end position="135"/>
    </location>
</feature>
<feature type="disulfide bond" evidence="3">
    <location>
        <begin position="139"/>
        <end position="181"/>
    </location>
</feature>
<feature type="disulfide bond" evidence="3">
    <location>
        <begin position="150"/>
        <end position="157"/>
    </location>
</feature>
<feature type="disulfide bond" evidence="3">
    <location>
        <begin position="190"/>
        <end position="196"/>
    </location>
</feature>
<feature type="splice variant" id="VSP_018325" description="In isoform 2." evidence="9">
    <location>
        <begin position="137"/>
        <end position="198"/>
    </location>
</feature>
<feature type="sequence variant" id="VAR_030399" description="In NDNC4; dbSNP:rs74315420." evidence="5">
    <original>Q</original>
    <variation>R</variation>
    <location>
        <position position="65"/>
    </location>
</feature>
<feature type="sequence variant" id="VAR_030400" description="In NDNC4; dbSNP:rs780506366." evidence="5">
    <original>C</original>
    <variation>F</variation>
    <location>
        <position position="95"/>
    </location>
</feature>
<feature type="sequence variant" id="VAR_052665" description="In dbSNP:rs6140807.">
    <original>R</original>
    <variation>Q</variation>
    <location>
        <position position="106"/>
    </location>
</feature>
<feature type="sequence variant" id="VAR_030401" description="In NDNC4; dbSNP:rs74315421." evidence="5">
    <original>C</original>
    <variation>R</variation>
    <location>
        <position position="107"/>
    </location>
</feature>
<feature type="sequence variant" id="VAR_030402" description="In NDNC4; dbSNP:rs74315422." evidence="5">
    <original>C</original>
    <variation>Y</variation>
    <location>
        <position position="118"/>
    </location>
</feature>
<dbReference type="EMBL" id="DQ355152">
    <property type="protein sequence ID" value="ABC75877.1"/>
    <property type="molecule type" value="mRNA"/>
</dbReference>
<dbReference type="EMBL" id="AK122609">
    <property type="status" value="NOT_ANNOTATED_CDS"/>
    <property type="molecule type" value="mRNA"/>
</dbReference>
<dbReference type="EMBL" id="AL050325">
    <property type="status" value="NOT_ANNOTATED_CDS"/>
    <property type="molecule type" value="Genomic_DNA"/>
</dbReference>
<dbReference type="CCDS" id="CCDS42845.1">
    <molecule id="Q2I0M5-2"/>
</dbReference>
<dbReference type="CCDS" id="CCDS42846.1">
    <molecule id="Q2I0M5-1"/>
</dbReference>
<dbReference type="RefSeq" id="NP_001025042.2">
    <molecule id="Q2I0M5-1"/>
    <property type="nucleotide sequence ID" value="NM_001029871.4"/>
</dbReference>
<dbReference type="RefSeq" id="NP_001035096.1">
    <molecule id="Q2I0M5-2"/>
    <property type="nucleotide sequence ID" value="NM_001040007.3"/>
</dbReference>
<dbReference type="SMR" id="Q2I0M5"/>
<dbReference type="BioGRID" id="131268">
    <property type="interactions" value="15"/>
</dbReference>
<dbReference type="CORUM" id="Q2I0M5"/>
<dbReference type="FunCoup" id="Q2I0M5">
    <property type="interactions" value="298"/>
</dbReference>
<dbReference type="IntAct" id="Q2I0M5">
    <property type="interactions" value="14"/>
</dbReference>
<dbReference type="STRING" id="9606.ENSP00000217260"/>
<dbReference type="GlyCosmos" id="Q2I0M5">
    <property type="glycosylation" value="1 site, No reported glycans"/>
</dbReference>
<dbReference type="GlyGen" id="Q2I0M5">
    <property type="glycosylation" value="1 site"/>
</dbReference>
<dbReference type="iPTMnet" id="Q2I0M5"/>
<dbReference type="PhosphoSitePlus" id="Q2I0M5"/>
<dbReference type="BioMuta" id="RSPO4"/>
<dbReference type="DMDM" id="97189858"/>
<dbReference type="MassIVE" id="Q2I0M5"/>
<dbReference type="PaxDb" id="9606-ENSP00000217260"/>
<dbReference type="PeptideAtlas" id="Q2I0M5"/>
<dbReference type="ProteomicsDB" id="61298">
    <molecule id="Q2I0M5-1"/>
</dbReference>
<dbReference type="ProteomicsDB" id="61299">
    <molecule id="Q2I0M5-2"/>
</dbReference>
<dbReference type="Antibodypedia" id="54131">
    <property type="antibodies" value="73 antibodies from 19 providers"/>
</dbReference>
<dbReference type="DNASU" id="343637"/>
<dbReference type="Ensembl" id="ENST00000217260.9">
    <molecule id="Q2I0M5-1"/>
    <property type="protein sequence ID" value="ENSP00000217260.4"/>
    <property type="gene ID" value="ENSG00000101282.9"/>
</dbReference>
<dbReference type="Ensembl" id="ENST00000400634.2">
    <molecule id="Q2I0M5-2"/>
    <property type="protein sequence ID" value="ENSP00000383475.2"/>
    <property type="gene ID" value="ENSG00000101282.9"/>
</dbReference>
<dbReference type="GeneID" id="343637"/>
<dbReference type="KEGG" id="hsa:343637"/>
<dbReference type="MANE-Select" id="ENST00000217260.9">
    <property type="protein sequence ID" value="ENSP00000217260.4"/>
    <property type="RefSeq nucleotide sequence ID" value="NM_001029871.4"/>
    <property type="RefSeq protein sequence ID" value="NP_001025042.2"/>
</dbReference>
<dbReference type="UCSC" id="uc002wej.4">
    <molecule id="Q2I0M5-1"/>
    <property type="organism name" value="human"/>
</dbReference>
<dbReference type="AGR" id="HGNC:16175"/>
<dbReference type="CTD" id="343637"/>
<dbReference type="DisGeNET" id="343637"/>
<dbReference type="GeneCards" id="RSPO4"/>
<dbReference type="HGNC" id="HGNC:16175">
    <property type="gene designation" value="RSPO4"/>
</dbReference>
<dbReference type="HPA" id="ENSG00000101282">
    <property type="expression patterns" value="Tissue enhanced (brain, lung)"/>
</dbReference>
<dbReference type="MalaCards" id="RSPO4"/>
<dbReference type="MIM" id="206800">
    <property type="type" value="phenotype"/>
</dbReference>
<dbReference type="MIM" id="610573">
    <property type="type" value="gene"/>
</dbReference>
<dbReference type="neXtProt" id="NX_Q2I0M5"/>
<dbReference type="OpenTargets" id="ENSG00000101282"/>
<dbReference type="Orphanet" id="94150">
    <property type="disease" value="Anonychia congenita totalis"/>
</dbReference>
<dbReference type="PharmGKB" id="PA25726"/>
<dbReference type="VEuPathDB" id="HostDB:ENSG00000101282"/>
<dbReference type="eggNOG" id="KOG3525">
    <property type="taxonomic scope" value="Eukaryota"/>
</dbReference>
<dbReference type="GeneTree" id="ENSGT00940000160937"/>
<dbReference type="HOGENOM" id="CLU_064219_1_1_1"/>
<dbReference type="InParanoid" id="Q2I0M5"/>
<dbReference type="OMA" id="ATCDSCF"/>
<dbReference type="OrthoDB" id="10257656at2759"/>
<dbReference type="PAN-GO" id="Q2I0M5">
    <property type="GO annotations" value="0 GO annotations based on evolutionary models"/>
</dbReference>
<dbReference type="PhylomeDB" id="Q2I0M5"/>
<dbReference type="TreeFam" id="TF331799"/>
<dbReference type="PathwayCommons" id="Q2I0M5"/>
<dbReference type="Reactome" id="R-HSA-4641263">
    <property type="pathway name" value="Regulation of FZD by ubiquitination"/>
</dbReference>
<dbReference type="SignaLink" id="Q2I0M5"/>
<dbReference type="BioGRID-ORCS" id="343637">
    <property type="hits" value="14 hits in 1143 CRISPR screens"/>
</dbReference>
<dbReference type="GenomeRNAi" id="343637"/>
<dbReference type="Pharos" id="Q2I0M5">
    <property type="development level" value="Tbio"/>
</dbReference>
<dbReference type="PRO" id="PR:Q2I0M5"/>
<dbReference type="Proteomes" id="UP000005640">
    <property type="component" value="Chromosome 20"/>
</dbReference>
<dbReference type="RNAct" id="Q2I0M5">
    <property type="molecule type" value="protein"/>
</dbReference>
<dbReference type="Bgee" id="ENSG00000101282">
    <property type="expression patterns" value="Expressed in upper lobe of left lung and 88 other cell types or tissues"/>
</dbReference>
<dbReference type="GO" id="GO:0005576">
    <property type="term" value="C:extracellular region"/>
    <property type="evidence" value="ECO:0000304"/>
    <property type="project" value="Reactome"/>
</dbReference>
<dbReference type="GO" id="GO:0005615">
    <property type="term" value="C:extracellular space"/>
    <property type="evidence" value="ECO:0000318"/>
    <property type="project" value="GO_Central"/>
</dbReference>
<dbReference type="GO" id="GO:0008201">
    <property type="term" value="F:heparin binding"/>
    <property type="evidence" value="ECO:0007669"/>
    <property type="project" value="UniProtKB-KW"/>
</dbReference>
<dbReference type="GO" id="GO:0005102">
    <property type="term" value="F:signaling receptor binding"/>
    <property type="evidence" value="ECO:0000318"/>
    <property type="project" value="GO_Central"/>
</dbReference>
<dbReference type="GO" id="GO:0035878">
    <property type="term" value="P:nail development"/>
    <property type="evidence" value="ECO:0000315"/>
    <property type="project" value="MGI"/>
</dbReference>
<dbReference type="GO" id="GO:0090263">
    <property type="term" value="P:positive regulation of canonical Wnt signaling pathway"/>
    <property type="evidence" value="ECO:0000318"/>
    <property type="project" value="GO_Central"/>
</dbReference>
<dbReference type="GO" id="GO:0030177">
    <property type="term" value="P:positive regulation of Wnt signaling pathway"/>
    <property type="evidence" value="ECO:0000314"/>
    <property type="project" value="UniProtKB"/>
</dbReference>
<dbReference type="GO" id="GO:0016055">
    <property type="term" value="P:Wnt signaling pathway"/>
    <property type="evidence" value="ECO:0007669"/>
    <property type="project" value="UniProtKB-KW"/>
</dbReference>
<dbReference type="CDD" id="cd00064">
    <property type="entry name" value="FU"/>
    <property type="match status" value="1"/>
</dbReference>
<dbReference type="FunFam" id="2.10.220.10:FF:000012">
    <property type="entry name" value="R-spondin 4"/>
    <property type="match status" value="1"/>
</dbReference>
<dbReference type="Gene3D" id="2.10.220.10">
    <property type="entry name" value="Hormone Receptor, Insulin-like Growth Factor Receptor 1, Chain A, domain 2"/>
    <property type="match status" value="1"/>
</dbReference>
<dbReference type="InterPro" id="IPR006212">
    <property type="entry name" value="Furin_repeat"/>
</dbReference>
<dbReference type="InterPro" id="IPR009030">
    <property type="entry name" value="Growth_fac_rcpt_cys_sf"/>
</dbReference>
<dbReference type="InterPro" id="IPR051514">
    <property type="entry name" value="R-spondin"/>
</dbReference>
<dbReference type="InterPro" id="IPR043601">
    <property type="entry name" value="Rspo_Fu-CRD_dom"/>
</dbReference>
<dbReference type="InterPro" id="IPR000884">
    <property type="entry name" value="TSP1_rpt"/>
</dbReference>
<dbReference type="PANTHER" id="PTHR46987">
    <property type="entry name" value="NEUROHYPOPHYSIAL HORMONES, N-TERMINAL DOMAIN CONTAINING PROTEIN"/>
    <property type="match status" value="1"/>
</dbReference>
<dbReference type="PANTHER" id="PTHR46987:SF6">
    <property type="entry name" value="R-SPONDIN-4"/>
    <property type="match status" value="1"/>
</dbReference>
<dbReference type="Pfam" id="PF15913">
    <property type="entry name" value="Furin-like_2"/>
    <property type="match status" value="1"/>
</dbReference>
<dbReference type="SMART" id="SM00261">
    <property type="entry name" value="FU"/>
    <property type="match status" value="2"/>
</dbReference>
<dbReference type="SMART" id="SM00209">
    <property type="entry name" value="TSP1"/>
    <property type="match status" value="1"/>
</dbReference>
<dbReference type="SUPFAM" id="SSF57184">
    <property type="entry name" value="Growth factor receptor domain"/>
    <property type="match status" value="1"/>
</dbReference>
<dbReference type="PROSITE" id="PS50092">
    <property type="entry name" value="TSP1"/>
    <property type="match status" value="1"/>
</dbReference>
<organism>
    <name type="scientific">Homo sapiens</name>
    <name type="common">Human</name>
    <dbReference type="NCBI Taxonomy" id="9606"/>
    <lineage>
        <taxon>Eukaryota</taxon>
        <taxon>Metazoa</taxon>
        <taxon>Chordata</taxon>
        <taxon>Craniata</taxon>
        <taxon>Vertebrata</taxon>
        <taxon>Euteleostomi</taxon>
        <taxon>Mammalia</taxon>
        <taxon>Eutheria</taxon>
        <taxon>Euarchontoglires</taxon>
        <taxon>Primates</taxon>
        <taxon>Haplorrhini</taxon>
        <taxon>Catarrhini</taxon>
        <taxon>Hominidae</taxon>
        <taxon>Homo</taxon>
    </lineage>
</organism>
<keyword id="KW-0025">Alternative splicing</keyword>
<keyword id="KW-0225">Disease variant</keyword>
<keyword id="KW-1015">Disulfide bond</keyword>
<keyword id="KW-0325">Glycoprotein</keyword>
<keyword id="KW-0358">Heparin-binding</keyword>
<keyword id="KW-0597">Phosphoprotein</keyword>
<keyword id="KW-1185">Reference proteome</keyword>
<keyword id="KW-0964">Secreted</keyword>
<keyword id="KW-0716">Sensory transduction</keyword>
<keyword id="KW-0732">Signal</keyword>
<keyword id="KW-0879">Wnt signaling pathway</keyword>
<sequence>MRAPLCLLLLVAHAVDMLALNRRKKQVGTGLGGNCTGCIICSEENGCSTCQQRLFLFIRREGIRQYGKCLHDCPPGYFGIRGQEVNRCKKCGATCESCFSQDFCIRCKRQFYLYKGKCLPTCPPGTLAHQNTRECQGECELGPWGGWSPCTHNGKTCGSAWGLESRVREAGRAGHEEAATCQVLSESRKCPIQRPCPGERSPGQKKGRKDRRPRKDRKLDRRLDVRPRQPGLQP</sequence>
<reference key="1">
    <citation type="journal article" date="2006" name="Cell Cycle">
        <title>R-spondin proteins: a novel link to beta-catenin activation.</title>
        <authorList>
            <person name="Kim K.-A."/>
            <person name="Zhao J."/>
            <person name="Andarmani S."/>
            <person name="Kakitani M."/>
            <person name="Oshima T."/>
            <person name="Binnerts M.E."/>
            <person name="Abo A."/>
            <person name="Tomizuka K."/>
            <person name="Funk W.D."/>
        </authorList>
    </citation>
    <scope>NUCLEOTIDE SEQUENCE [MRNA] (ISOFORM 2)</scope>
</reference>
<reference key="2">
    <citation type="journal article" date="2004" name="Nat. Genet.">
        <title>Complete sequencing and characterization of 21,243 full-length human cDNAs.</title>
        <authorList>
            <person name="Ota T."/>
            <person name="Suzuki Y."/>
            <person name="Nishikawa T."/>
            <person name="Otsuki T."/>
            <person name="Sugiyama T."/>
            <person name="Irie R."/>
            <person name="Wakamatsu A."/>
            <person name="Hayashi K."/>
            <person name="Sato H."/>
            <person name="Nagai K."/>
            <person name="Kimura K."/>
            <person name="Makita H."/>
            <person name="Sekine M."/>
            <person name="Obayashi M."/>
            <person name="Nishi T."/>
            <person name="Shibahara T."/>
            <person name="Tanaka T."/>
            <person name="Ishii S."/>
            <person name="Yamamoto J."/>
            <person name="Saito K."/>
            <person name="Kawai Y."/>
            <person name="Isono Y."/>
            <person name="Nakamura Y."/>
            <person name="Nagahari K."/>
            <person name="Murakami K."/>
            <person name="Yasuda T."/>
            <person name="Iwayanagi T."/>
            <person name="Wagatsuma M."/>
            <person name="Shiratori A."/>
            <person name="Sudo H."/>
            <person name="Hosoiri T."/>
            <person name="Kaku Y."/>
            <person name="Kodaira H."/>
            <person name="Kondo H."/>
            <person name="Sugawara M."/>
            <person name="Takahashi M."/>
            <person name="Kanda K."/>
            <person name="Yokoi T."/>
            <person name="Furuya T."/>
            <person name="Kikkawa E."/>
            <person name="Omura Y."/>
            <person name="Abe K."/>
            <person name="Kamihara K."/>
            <person name="Katsuta N."/>
            <person name="Sato K."/>
            <person name="Tanikawa M."/>
            <person name="Yamazaki M."/>
            <person name="Ninomiya K."/>
            <person name="Ishibashi T."/>
            <person name="Yamashita H."/>
            <person name="Murakawa K."/>
            <person name="Fujimori K."/>
            <person name="Tanai H."/>
            <person name="Kimata M."/>
            <person name="Watanabe M."/>
            <person name="Hiraoka S."/>
            <person name="Chiba Y."/>
            <person name="Ishida S."/>
            <person name="Ono Y."/>
            <person name="Takiguchi S."/>
            <person name="Watanabe S."/>
            <person name="Yosida M."/>
            <person name="Hotuta T."/>
            <person name="Kusano J."/>
            <person name="Kanehori K."/>
            <person name="Takahashi-Fujii A."/>
            <person name="Hara H."/>
            <person name="Tanase T.-O."/>
            <person name="Nomura Y."/>
            <person name="Togiya S."/>
            <person name="Komai F."/>
            <person name="Hara R."/>
            <person name="Takeuchi K."/>
            <person name="Arita M."/>
            <person name="Imose N."/>
            <person name="Musashino K."/>
            <person name="Yuuki H."/>
            <person name="Oshima A."/>
            <person name="Sasaki N."/>
            <person name="Aotsuka S."/>
            <person name="Yoshikawa Y."/>
            <person name="Matsunawa H."/>
            <person name="Ichihara T."/>
            <person name="Shiohata N."/>
            <person name="Sano S."/>
            <person name="Moriya S."/>
            <person name="Momiyama H."/>
            <person name="Satoh N."/>
            <person name="Takami S."/>
            <person name="Terashima Y."/>
            <person name="Suzuki O."/>
            <person name="Nakagawa S."/>
            <person name="Senoh A."/>
            <person name="Mizoguchi H."/>
            <person name="Goto Y."/>
            <person name="Shimizu F."/>
            <person name="Wakebe H."/>
            <person name="Hishigaki H."/>
            <person name="Watanabe T."/>
            <person name="Sugiyama A."/>
            <person name="Takemoto M."/>
            <person name="Kawakami B."/>
            <person name="Yamazaki M."/>
            <person name="Watanabe K."/>
            <person name="Kumagai A."/>
            <person name="Itakura S."/>
            <person name="Fukuzumi Y."/>
            <person name="Fujimori Y."/>
            <person name="Komiyama M."/>
            <person name="Tashiro H."/>
            <person name="Tanigami A."/>
            <person name="Fujiwara T."/>
            <person name="Ono T."/>
            <person name="Yamada K."/>
            <person name="Fujii Y."/>
            <person name="Ozaki K."/>
            <person name="Hirao M."/>
            <person name="Ohmori Y."/>
            <person name="Kawabata A."/>
            <person name="Hikiji T."/>
            <person name="Kobatake N."/>
            <person name="Inagaki H."/>
            <person name="Ikema Y."/>
            <person name="Okamoto S."/>
            <person name="Okitani R."/>
            <person name="Kawakami T."/>
            <person name="Noguchi S."/>
            <person name="Itoh T."/>
            <person name="Shigeta K."/>
            <person name="Senba T."/>
            <person name="Matsumura K."/>
            <person name="Nakajima Y."/>
            <person name="Mizuno T."/>
            <person name="Morinaga M."/>
            <person name="Sasaki M."/>
            <person name="Togashi T."/>
            <person name="Oyama M."/>
            <person name="Hata H."/>
            <person name="Watanabe M."/>
            <person name="Komatsu T."/>
            <person name="Mizushima-Sugano J."/>
            <person name="Satoh T."/>
            <person name="Shirai Y."/>
            <person name="Takahashi Y."/>
            <person name="Nakagawa K."/>
            <person name="Okumura K."/>
            <person name="Nagase T."/>
            <person name="Nomura N."/>
            <person name="Kikuchi H."/>
            <person name="Masuho Y."/>
            <person name="Yamashita R."/>
            <person name="Nakai K."/>
            <person name="Yada T."/>
            <person name="Nakamura Y."/>
            <person name="Ohara O."/>
            <person name="Isogai T."/>
            <person name="Sugano S."/>
        </authorList>
    </citation>
    <scope>NUCLEOTIDE SEQUENCE [LARGE SCALE MRNA] (ISOFORM 1)</scope>
    <source>
        <tissue>Glial tumor</tissue>
    </source>
</reference>
<reference key="3">
    <citation type="journal article" date="2001" name="Nature">
        <title>The DNA sequence and comparative analysis of human chromosome 20.</title>
        <authorList>
            <person name="Deloukas P."/>
            <person name="Matthews L.H."/>
            <person name="Ashurst J.L."/>
            <person name="Burton J."/>
            <person name="Gilbert J.G.R."/>
            <person name="Jones M."/>
            <person name="Stavrides G."/>
            <person name="Almeida J.P."/>
            <person name="Babbage A.K."/>
            <person name="Bagguley C.L."/>
            <person name="Bailey J."/>
            <person name="Barlow K.F."/>
            <person name="Bates K.N."/>
            <person name="Beard L.M."/>
            <person name="Beare D.M."/>
            <person name="Beasley O.P."/>
            <person name="Bird C.P."/>
            <person name="Blakey S.E."/>
            <person name="Bridgeman A.M."/>
            <person name="Brown A.J."/>
            <person name="Buck D."/>
            <person name="Burrill W.D."/>
            <person name="Butler A.P."/>
            <person name="Carder C."/>
            <person name="Carter N.P."/>
            <person name="Chapman J.C."/>
            <person name="Clamp M."/>
            <person name="Clark G."/>
            <person name="Clark L.N."/>
            <person name="Clark S.Y."/>
            <person name="Clee C.M."/>
            <person name="Clegg S."/>
            <person name="Cobley V.E."/>
            <person name="Collier R.E."/>
            <person name="Connor R.E."/>
            <person name="Corby N.R."/>
            <person name="Coulson A."/>
            <person name="Coville G.J."/>
            <person name="Deadman R."/>
            <person name="Dhami P.D."/>
            <person name="Dunn M."/>
            <person name="Ellington A.G."/>
            <person name="Frankland J.A."/>
            <person name="Fraser A."/>
            <person name="French L."/>
            <person name="Garner P."/>
            <person name="Grafham D.V."/>
            <person name="Griffiths C."/>
            <person name="Griffiths M.N.D."/>
            <person name="Gwilliam R."/>
            <person name="Hall R.E."/>
            <person name="Hammond S."/>
            <person name="Harley J.L."/>
            <person name="Heath P.D."/>
            <person name="Ho S."/>
            <person name="Holden J.L."/>
            <person name="Howden P.J."/>
            <person name="Huckle E."/>
            <person name="Hunt A.R."/>
            <person name="Hunt S.E."/>
            <person name="Jekosch K."/>
            <person name="Johnson C.M."/>
            <person name="Johnson D."/>
            <person name="Kay M.P."/>
            <person name="Kimberley A.M."/>
            <person name="King A."/>
            <person name="Knights A."/>
            <person name="Laird G.K."/>
            <person name="Lawlor S."/>
            <person name="Lehvaeslaiho M.H."/>
            <person name="Leversha M.A."/>
            <person name="Lloyd C."/>
            <person name="Lloyd D.M."/>
            <person name="Lovell J.D."/>
            <person name="Marsh V.L."/>
            <person name="Martin S.L."/>
            <person name="McConnachie L.J."/>
            <person name="McLay K."/>
            <person name="McMurray A.A."/>
            <person name="Milne S.A."/>
            <person name="Mistry D."/>
            <person name="Moore M.J.F."/>
            <person name="Mullikin J.C."/>
            <person name="Nickerson T."/>
            <person name="Oliver K."/>
            <person name="Parker A."/>
            <person name="Patel R."/>
            <person name="Pearce T.A.V."/>
            <person name="Peck A.I."/>
            <person name="Phillimore B.J.C.T."/>
            <person name="Prathalingam S.R."/>
            <person name="Plumb R.W."/>
            <person name="Ramsay H."/>
            <person name="Rice C.M."/>
            <person name="Ross M.T."/>
            <person name="Scott C.E."/>
            <person name="Sehra H.K."/>
            <person name="Shownkeen R."/>
            <person name="Sims S."/>
            <person name="Skuce C.D."/>
            <person name="Smith M.L."/>
            <person name="Soderlund C."/>
            <person name="Steward C.A."/>
            <person name="Sulston J.E."/>
            <person name="Swann R.M."/>
            <person name="Sycamore N."/>
            <person name="Taylor R."/>
            <person name="Tee L."/>
            <person name="Thomas D.W."/>
            <person name="Thorpe A."/>
            <person name="Tracey A."/>
            <person name="Tromans A.C."/>
            <person name="Vaudin M."/>
            <person name="Wall M."/>
            <person name="Wallis J.M."/>
            <person name="Whitehead S.L."/>
            <person name="Whittaker P."/>
            <person name="Willey D.L."/>
            <person name="Williams L."/>
            <person name="Williams S.A."/>
            <person name="Wilming L."/>
            <person name="Wray P.W."/>
            <person name="Hubbard T."/>
            <person name="Durbin R.M."/>
            <person name="Bentley D.R."/>
            <person name="Beck S."/>
            <person name="Rogers J."/>
        </authorList>
    </citation>
    <scope>NUCLEOTIDE SEQUENCE [LARGE SCALE GENOMIC DNA]</scope>
</reference>
<reference key="4">
    <citation type="journal article" date="2004" name="Anal. Chem.">
        <title>Robust phosphoproteomic profiling of tyrosine phosphorylation sites from human T cells using immobilized metal affinity chromatography and tandem mass spectrometry.</title>
        <authorList>
            <person name="Brill L.M."/>
            <person name="Salomon A.R."/>
            <person name="Ficarro S.B."/>
            <person name="Mukherji M."/>
            <person name="Stettler-Gill M."/>
            <person name="Peters E.C."/>
        </authorList>
    </citation>
    <scope>IDENTIFICATION BY MASS SPECTROMETRY [LARGE SCALE ANALYSIS]</scope>
    <source>
        <tissue>Leukemic T-cell</tissue>
    </source>
</reference>
<reference key="5">
    <citation type="journal article" date="2011" name="EMBO Rep.">
        <title>LGR4 and LGR5 are R-spondin receptors mediating Wnt/beta-catenin and Wnt/PCP signalling.</title>
        <authorList>
            <person name="Glinka A."/>
            <person name="Dolde C."/>
            <person name="Kirsch N."/>
            <person name="Huang Y.L."/>
            <person name="Kazanskaya O."/>
            <person name="Ingelfinger D."/>
            <person name="Boutros M."/>
            <person name="Cruciat C.M."/>
            <person name="Niehrs C."/>
        </authorList>
    </citation>
    <scope>FUNCTION</scope>
    <scope>INTERACTION WITH LGR4 AND LGR5</scope>
</reference>
<reference key="6">
    <citation type="journal article" date="2011" name="Nature">
        <title>Lgr5 homologues associate with Wnt receptors and mediate R-spondin signalling.</title>
        <authorList>
            <person name="de Lau W."/>
            <person name="Barker N."/>
            <person name="Low T.Y."/>
            <person name="Koo B.K."/>
            <person name="Li V.S."/>
            <person name="Teunissen H."/>
            <person name="Kujala P."/>
            <person name="Haegebarth A."/>
            <person name="Peters P.J."/>
            <person name="van de Wetering M."/>
            <person name="Stange D.E."/>
            <person name="van Es J.E."/>
            <person name="Guardavaccaro D."/>
            <person name="Schasfoort R.B."/>
            <person name="Mohri Y."/>
            <person name="Nishimori K."/>
            <person name="Mohammed S."/>
            <person name="Heck A.J."/>
            <person name="Clevers H."/>
        </authorList>
    </citation>
    <scope>FUNCTION</scope>
    <scope>INTERACTION WITH LGR4; LGR5 AND LGR6</scope>
</reference>
<reference key="7">
    <citation type="journal article" date="2018" name="Nature">
        <title>RSPO2 inhibition of RNF43 and ZNRF3 governs limb development independently of LGR4/5/6.</title>
        <authorList>
            <person name="Szenker-Ravi E."/>
            <person name="Altunoglu U."/>
            <person name="Leushacke M."/>
            <person name="Bosso-Lefevre C."/>
            <person name="Khatoo M."/>
            <person name="Thi Tran H."/>
            <person name="Naert T."/>
            <person name="Noelanders R."/>
            <person name="Hajamohideen A."/>
            <person name="Beneteau C."/>
            <person name="de Sousa S.B."/>
            <person name="Karaman B."/>
            <person name="Latypova X."/>
            <person name="Basaran S."/>
            <person name="Yuecel E.B."/>
            <person name="Tan T.T."/>
            <person name="Vlaminck L."/>
            <person name="Nayak S.S."/>
            <person name="Shukla A."/>
            <person name="Girisha K.M."/>
            <person name="Le Caignec C."/>
            <person name="Soshnikova N."/>
            <person name="Uyguner Z.O."/>
            <person name="Vleminckx K."/>
            <person name="Barker N."/>
            <person name="Kayserili H."/>
            <person name="Reversade B."/>
        </authorList>
    </citation>
    <scope>FUNCTION</scope>
</reference>
<reference key="8">
    <citation type="journal article" date="2006" name="Nat. Genet.">
        <title>The gene encoding R-spondin 4 (RSPO4), a secreted protein implicated in Wnt signaling, is mutated in inherited anonychia.</title>
        <authorList>
            <person name="Blaydon D.C."/>
            <person name="Ishii Y."/>
            <person name="O'Toole E.A."/>
            <person name="Unsworth H.C."/>
            <person name="Teh M.-T."/>
            <person name="Rueschendorf F."/>
            <person name="Sinclair C."/>
            <person name="Hopsu-Havu V.K."/>
            <person name="Tidman N."/>
            <person name="Moss C."/>
            <person name="Watson R."/>
            <person name="de Berker D."/>
            <person name="Wajid M."/>
            <person name="Christiano A.M."/>
            <person name="Kelsell D.P."/>
        </authorList>
    </citation>
    <scope>VARIANTS NDNC4 ARG-65; PHE-95; ARG-107 AND TYR-118</scope>
</reference>
<comment type="function">
    <text evidence="6 7 8">Activator of the canonical Wnt signaling pathway by acting as a ligand for LGR4-6 receptors (PubMed:29769720). Upon binding to LGR4-6 (LGR4, LGR5 or LGR6), LGR4-6 associate with phosphorylated LRP6 and frizzled receptors that are activated by extracellular Wnt receptors, triggering the canonical Wnt signaling pathway to increase expression of target genes. Also regulates the canonical Wnt/beta-catenin-dependent pathway and non-canonical Wnt signaling by acting as an inhibitor of ZNRF3, an important regulator of the Wnt signaling pathway (PubMed:21727895, PubMed:21909076).</text>
</comment>
<comment type="subunit">
    <text evidence="1 6 7">Binds heparin (By similarity). Interacts with LGR4, LGR5 and LGR6.</text>
</comment>
<comment type="interaction">
    <interactant intactId="EBI-12821217">
        <id>Q2I0M5</id>
    </interactant>
    <interactant intactId="EBI-17183751">
        <id>X5D778</id>
        <label>ANKRD11</label>
    </interactant>
    <organismsDiffer>false</organismsDiffer>
    <experiments>3</experiments>
</comment>
<comment type="interaction">
    <interactant intactId="EBI-12821217">
        <id>Q2I0M5</id>
    </interactant>
    <interactant intactId="EBI-1051531">
        <id>Q6P158</id>
        <label>DHX57</label>
    </interactant>
    <organismsDiffer>false</organismsDiffer>
    <experiments>3</experiments>
</comment>
<comment type="interaction">
    <interactant intactId="EBI-12821217">
        <id>Q2I0M5</id>
    </interactant>
    <interactant intactId="EBI-11427343">
        <id>Q9P2W3</id>
        <label>GNG13</label>
    </interactant>
    <organismsDiffer>false</organismsDiffer>
    <experiments>3</experiments>
</comment>
<comment type="interaction">
    <interactant intactId="EBI-12821217">
        <id>Q2I0M5</id>
    </interactant>
    <interactant intactId="EBI-347538">
        <id>Q9Y4H4</id>
        <label>GPSM3</label>
    </interactant>
    <organismsDiffer>false</organismsDiffer>
    <experiments>3</experiments>
</comment>
<comment type="interaction">
    <interactant intactId="EBI-12821217">
        <id>Q2I0M5</id>
    </interactant>
    <interactant intactId="EBI-11978177">
        <id>Q96NT3-2</id>
        <label>GUCD1</label>
    </interactant>
    <organismsDiffer>false</organismsDiffer>
    <experiments>3</experiments>
</comment>
<comment type="interaction">
    <interactant intactId="EBI-12821217">
        <id>Q2I0M5</id>
    </interactant>
    <interactant intactId="EBI-740220">
        <id>O14964</id>
        <label>HGS</label>
    </interactant>
    <organismsDiffer>false</organismsDiffer>
    <experiments>3</experiments>
</comment>
<comment type="interaction">
    <interactant intactId="EBI-12821217">
        <id>Q2I0M5</id>
    </interactant>
    <interactant intactId="EBI-6426443">
        <id>Q2WGJ6</id>
        <label>KLHL38</label>
    </interactant>
    <organismsDiffer>false</organismsDiffer>
    <experiments>3</experiments>
</comment>
<comment type="interaction">
    <interactant intactId="EBI-12821217">
        <id>Q2I0M5</id>
    </interactant>
    <interactant intactId="EBI-713568">
        <id>P45984</id>
        <label>MAPK9</label>
    </interactant>
    <organismsDiffer>false</organismsDiffer>
    <experiments>3</experiments>
</comment>
<comment type="interaction">
    <interactant intactId="EBI-12821217">
        <id>Q2I0M5</id>
    </interactant>
    <interactant intactId="EBI-2340269">
        <id>Q13064</id>
        <label>MKRN3</label>
    </interactant>
    <organismsDiffer>false</organismsDiffer>
    <experiments>3</experiments>
</comment>
<comment type="interaction">
    <interactant intactId="EBI-12821217">
        <id>Q2I0M5</id>
    </interactant>
    <interactant intactId="EBI-10232538">
        <id>Q8WWB5</id>
        <label>PIH1D2</label>
    </interactant>
    <organismsDiffer>false</organismsDiffer>
    <experiments>3</experiments>
</comment>
<comment type="interaction">
    <interactant intactId="EBI-12821217">
        <id>Q2I0M5</id>
    </interactant>
    <interactant intactId="EBI-749295">
        <id>O75716</id>
        <label>STK16</label>
    </interactant>
    <organismsDiffer>false</organismsDiffer>
    <experiments>3</experiments>
</comment>
<comment type="interaction">
    <interactant intactId="EBI-12821217">
        <id>Q2I0M5</id>
    </interactant>
    <interactant intactId="EBI-2511991">
        <id>Q9Y2K6</id>
        <label>USP20</label>
    </interactant>
    <organismsDiffer>false</organismsDiffer>
    <experiments>3</experiments>
</comment>
<comment type="interaction">
    <interactant intactId="EBI-12821217">
        <id>Q2I0M5</id>
    </interactant>
    <interactant intactId="EBI-373456">
        <id>Q9Y3S2</id>
        <label>ZNF330</label>
    </interactant>
    <organismsDiffer>false</organismsDiffer>
    <experiments>3</experiments>
</comment>
<comment type="interaction">
    <interactant intactId="EBI-12821217">
        <id>Q2I0M5</id>
    </interactant>
    <interactant intactId="EBI-12840750">
        <id>Q15935</id>
        <label>ZNF77</label>
    </interactant>
    <organismsDiffer>false</organismsDiffer>
    <experiments>3</experiments>
</comment>
<comment type="subcellular location">
    <subcellularLocation>
        <location evidence="1">Secreted</location>
    </subcellularLocation>
</comment>
<comment type="alternative products">
    <event type="alternative splicing"/>
    <isoform>
        <id>Q2I0M5-1</id>
        <name>1</name>
        <sequence type="displayed"/>
    </isoform>
    <isoform>
        <id>Q2I0M5-2</id>
        <name>2</name>
        <sequence type="described" ref="VSP_018325"/>
    </isoform>
</comment>
<comment type="domain">
    <text evidence="1">The FU repeat is required for activation and stabilization of beta-catenin.</text>
</comment>
<comment type="PTM">
    <text>Tyr-112 may be phosphorylated; however as this position is probably extracellular, the vivo relevance is not proven.</text>
</comment>
<comment type="disease" evidence="5">
    <disease id="DI-01185">
        <name>Nail disorder, non-syndromic congenital, 4</name>
        <acronym>NDNC4</acronym>
        <description>A nail disorder characterized by congenital anonychia or its milder phenotypic variant hyponychia. Anonychia/hyponychia is the absence or severe hypoplasia of all fingernails and toenails without significant bone anomalies.</description>
        <dbReference type="MIM" id="206800"/>
    </disease>
    <text>The disease is caused by variants affecting the gene represented in this entry.</text>
</comment>
<comment type="similarity">
    <text evidence="10">Belongs to the R-spondin family.</text>
</comment>
<evidence type="ECO:0000250" key="1"/>
<evidence type="ECO:0000255" key="2"/>
<evidence type="ECO:0000255" key="3">
    <source>
        <dbReference type="PROSITE-ProRule" id="PRU00210"/>
    </source>
</evidence>
<evidence type="ECO:0000256" key="4">
    <source>
        <dbReference type="SAM" id="MobiDB-lite"/>
    </source>
</evidence>
<evidence type="ECO:0000269" key="5">
    <source>
    </source>
</evidence>
<evidence type="ECO:0000269" key="6">
    <source>
    </source>
</evidence>
<evidence type="ECO:0000269" key="7">
    <source>
    </source>
</evidence>
<evidence type="ECO:0000269" key="8">
    <source>
    </source>
</evidence>
<evidence type="ECO:0000303" key="9">
    <source>
    </source>
</evidence>
<evidence type="ECO:0000305" key="10"/>